<dbReference type="EMBL" id="CP000544">
    <property type="protein sequence ID" value="ABM61634.1"/>
    <property type="molecule type" value="Genomic_DNA"/>
</dbReference>
<dbReference type="RefSeq" id="WP_011813657.1">
    <property type="nucleotide sequence ID" value="NC_008789.1"/>
</dbReference>
<dbReference type="SMR" id="A1WVC2"/>
<dbReference type="STRING" id="349124.Hhal_0858"/>
<dbReference type="KEGG" id="hha:Hhal_0858"/>
<dbReference type="eggNOG" id="COG0087">
    <property type="taxonomic scope" value="Bacteria"/>
</dbReference>
<dbReference type="HOGENOM" id="CLU_044142_4_1_6"/>
<dbReference type="OrthoDB" id="9806135at2"/>
<dbReference type="Proteomes" id="UP000000647">
    <property type="component" value="Chromosome"/>
</dbReference>
<dbReference type="GO" id="GO:0022625">
    <property type="term" value="C:cytosolic large ribosomal subunit"/>
    <property type="evidence" value="ECO:0007669"/>
    <property type="project" value="TreeGrafter"/>
</dbReference>
<dbReference type="GO" id="GO:0019843">
    <property type="term" value="F:rRNA binding"/>
    <property type="evidence" value="ECO:0007669"/>
    <property type="project" value="UniProtKB-UniRule"/>
</dbReference>
<dbReference type="GO" id="GO:0003735">
    <property type="term" value="F:structural constituent of ribosome"/>
    <property type="evidence" value="ECO:0007669"/>
    <property type="project" value="InterPro"/>
</dbReference>
<dbReference type="GO" id="GO:0006412">
    <property type="term" value="P:translation"/>
    <property type="evidence" value="ECO:0007669"/>
    <property type="project" value="UniProtKB-UniRule"/>
</dbReference>
<dbReference type="FunFam" id="2.40.30.10:FF:000004">
    <property type="entry name" value="50S ribosomal protein L3"/>
    <property type="match status" value="1"/>
</dbReference>
<dbReference type="FunFam" id="3.30.160.810:FF:000001">
    <property type="entry name" value="50S ribosomal protein L3"/>
    <property type="match status" value="1"/>
</dbReference>
<dbReference type="Gene3D" id="3.30.160.810">
    <property type="match status" value="1"/>
</dbReference>
<dbReference type="Gene3D" id="2.40.30.10">
    <property type="entry name" value="Translation factors"/>
    <property type="match status" value="1"/>
</dbReference>
<dbReference type="HAMAP" id="MF_01325_B">
    <property type="entry name" value="Ribosomal_uL3_B"/>
    <property type="match status" value="1"/>
</dbReference>
<dbReference type="InterPro" id="IPR000597">
    <property type="entry name" value="Ribosomal_uL3"/>
</dbReference>
<dbReference type="InterPro" id="IPR019927">
    <property type="entry name" value="Ribosomal_uL3_bac/org-type"/>
</dbReference>
<dbReference type="InterPro" id="IPR019926">
    <property type="entry name" value="Ribosomal_uL3_CS"/>
</dbReference>
<dbReference type="InterPro" id="IPR009000">
    <property type="entry name" value="Transl_B-barrel_sf"/>
</dbReference>
<dbReference type="NCBIfam" id="TIGR03625">
    <property type="entry name" value="L3_bact"/>
    <property type="match status" value="1"/>
</dbReference>
<dbReference type="PANTHER" id="PTHR11229">
    <property type="entry name" value="50S RIBOSOMAL PROTEIN L3"/>
    <property type="match status" value="1"/>
</dbReference>
<dbReference type="PANTHER" id="PTHR11229:SF16">
    <property type="entry name" value="LARGE RIBOSOMAL SUBUNIT PROTEIN UL3C"/>
    <property type="match status" value="1"/>
</dbReference>
<dbReference type="Pfam" id="PF00297">
    <property type="entry name" value="Ribosomal_L3"/>
    <property type="match status" value="1"/>
</dbReference>
<dbReference type="SUPFAM" id="SSF50447">
    <property type="entry name" value="Translation proteins"/>
    <property type="match status" value="1"/>
</dbReference>
<dbReference type="PROSITE" id="PS00474">
    <property type="entry name" value="RIBOSOMAL_L3"/>
    <property type="match status" value="1"/>
</dbReference>
<feature type="chain" id="PRO_1000052060" description="Large ribosomal subunit protein uL3">
    <location>
        <begin position="1"/>
        <end position="216"/>
    </location>
</feature>
<feature type="region of interest" description="Disordered" evidence="2">
    <location>
        <begin position="89"/>
        <end position="108"/>
    </location>
</feature>
<feature type="region of interest" description="Disordered" evidence="2">
    <location>
        <begin position="139"/>
        <end position="158"/>
    </location>
</feature>
<feature type="modified residue" description="N5-methylglutamine" evidence="1">
    <location>
        <position position="157"/>
    </location>
</feature>
<comment type="function">
    <text evidence="1">One of the primary rRNA binding proteins, it binds directly near the 3'-end of the 23S rRNA, where it nucleates assembly of the 50S subunit.</text>
</comment>
<comment type="subunit">
    <text evidence="1">Part of the 50S ribosomal subunit. Forms a cluster with proteins L14 and L19.</text>
</comment>
<comment type="PTM">
    <text evidence="1">Methylated by PrmB.</text>
</comment>
<comment type="similarity">
    <text evidence="1">Belongs to the universal ribosomal protein uL3 family.</text>
</comment>
<sequence length="216" mass="23270">MAIGIVGRKRGMTRVFTEEGGSIPVTVVEADPNRVTQVKTEESDGYRAVQVTAGRRKPQRVRKPEAGHFARAGVEAGRGVWEFRLDKGQRASDEEMPETGGSIDVGGFEAGQKVDVTGTTKGRGFAGTVRRHNFRAQRNTHGNSKSHRVPGSIGQCQSPGRVFKGKKMAGQMGNRRATIQNLEVVRVDSERNLLLIRGAVPGAVGSDLIVRPASKA</sequence>
<keyword id="KW-0488">Methylation</keyword>
<keyword id="KW-1185">Reference proteome</keyword>
<keyword id="KW-0687">Ribonucleoprotein</keyword>
<keyword id="KW-0689">Ribosomal protein</keyword>
<keyword id="KW-0694">RNA-binding</keyword>
<keyword id="KW-0699">rRNA-binding</keyword>
<organism>
    <name type="scientific">Halorhodospira halophila (strain DSM 244 / SL1)</name>
    <name type="common">Ectothiorhodospira halophila (strain DSM 244 / SL1)</name>
    <dbReference type="NCBI Taxonomy" id="349124"/>
    <lineage>
        <taxon>Bacteria</taxon>
        <taxon>Pseudomonadati</taxon>
        <taxon>Pseudomonadota</taxon>
        <taxon>Gammaproteobacteria</taxon>
        <taxon>Chromatiales</taxon>
        <taxon>Ectothiorhodospiraceae</taxon>
        <taxon>Halorhodospira</taxon>
    </lineage>
</organism>
<accession>A1WVC2</accession>
<name>RL3_HALHL</name>
<proteinExistence type="inferred from homology"/>
<reference key="1">
    <citation type="submission" date="2006-12" db="EMBL/GenBank/DDBJ databases">
        <title>Complete sequence of Halorhodospira halophila SL1.</title>
        <authorList>
            <consortium name="US DOE Joint Genome Institute"/>
            <person name="Copeland A."/>
            <person name="Lucas S."/>
            <person name="Lapidus A."/>
            <person name="Barry K."/>
            <person name="Detter J.C."/>
            <person name="Glavina del Rio T."/>
            <person name="Hammon N."/>
            <person name="Israni S."/>
            <person name="Dalin E."/>
            <person name="Tice H."/>
            <person name="Pitluck S."/>
            <person name="Saunders E."/>
            <person name="Brettin T."/>
            <person name="Bruce D."/>
            <person name="Han C."/>
            <person name="Tapia R."/>
            <person name="Schmutz J."/>
            <person name="Larimer F."/>
            <person name="Land M."/>
            <person name="Hauser L."/>
            <person name="Kyrpides N."/>
            <person name="Mikhailova N."/>
            <person name="Hoff W."/>
            <person name="Richardson P."/>
        </authorList>
    </citation>
    <scope>NUCLEOTIDE SEQUENCE [LARGE SCALE GENOMIC DNA]</scope>
    <source>
        <strain>DSM 244 / SL1</strain>
    </source>
</reference>
<gene>
    <name evidence="1" type="primary">rplC</name>
    <name type="ordered locus">Hhal_0858</name>
</gene>
<protein>
    <recommendedName>
        <fullName evidence="1">Large ribosomal subunit protein uL3</fullName>
    </recommendedName>
    <alternativeName>
        <fullName evidence="3">50S ribosomal protein L3</fullName>
    </alternativeName>
</protein>
<evidence type="ECO:0000255" key="1">
    <source>
        <dbReference type="HAMAP-Rule" id="MF_01325"/>
    </source>
</evidence>
<evidence type="ECO:0000256" key="2">
    <source>
        <dbReference type="SAM" id="MobiDB-lite"/>
    </source>
</evidence>
<evidence type="ECO:0000305" key="3"/>